<comment type="function">
    <text evidence="1">May constitute a glutathione peroxidase-like protective system against oxidative stresses.</text>
</comment>
<comment type="catalytic activity">
    <reaction>
        <text>2 glutathione + H2O2 = glutathione disulfide + 2 H2O</text>
        <dbReference type="Rhea" id="RHEA:16833"/>
        <dbReference type="ChEBI" id="CHEBI:15377"/>
        <dbReference type="ChEBI" id="CHEBI:16240"/>
        <dbReference type="ChEBI" id="CHEBI:57925"/>
        <dbReference type="ChEBI" id="CHEBI:58297"/>
        <dbReference type="EC" id="1.11.1.9"/>
    </reaction>
</comment>
<comment type="similarity">
    <text evidence="2">Belongs to the glutathione peroxidase family.</text>
</comment>
<comment type="sequence caution" evidence="2">
    <conflict type="erroneous gene model prediction">
        <sequence resource="EMBL-CDS" id="AAF19709"/>
    </conflict>
</comment>
<feature type="chain" id="PRO_0000066640" description="Probable glutathione peroxidase 8">
    <location>
        <begin position="1"/>
        <end position="167"/>
    </location>
</feature>
<feature type="active site" evidence="1">
    <location>
        <position position="41"/>
    </location>
</feature>
<accession>Q8LBU2</accession>
<accession>Q9SH32</accession>
<sequence length="167" mass="19068">MATKEPESVYELSIEDAKGNNLALSQYKDKVLLIVNVASKCGMTNSNYTELNELYNRYKDKGLEILAFPCNQFGDEEPGTNDQITDFVCTRFKSEFPIFNKIEVNGENASPLYKFLKKGKWGIFGDDIQWNFAKFLVDKNGQAVQRYYPTTSPLTLEHDIKNLLNIS</sequence>
<evidence type="ECO:0000250" key="1"/>
<evidence type="ECO:0000305" key="2"/>
<name>GPX8_ARATH</name>
<reference key="1">
    <citation type="journal article" date="2000" name="Nature">
        <title>Sequence and analysis of chromosome 1 of the plant Arabidopsis thaliana.</title>
        <authorList>
            <person name="Theologis A."/>
            <person name="Ecker J.R."/>
            <person name="Palm C.J."/>
            <person name="Federspiel N.A."/>
            <person name="Kaul S."/>
            <person name="White O."/>
            <person name="Alonso J."/>
            <person name="Altafi H."/>
            <person name="Araujo R."/>
            <person name="Bowman C.L."/>
            <person name="Brooks S.Y."/>
            <person name="Buehler E."/>
            <person name="Chan A."/>
            <person name="Chao Q."/>
            <person name="Chen H."/>
            <person name="Cheuk R.F."/>
            <person name="Chin C.W."/>
            <person name="Chung M.K."/>
            <person name="Conn L."/>
            <person name="Conway A.B."/>
            <person name="Conway A.R."/>
            <person name="Creasy T.H."/>
            <person name="Dewar K."/>
            <person name="Dunn P."/>
            <person name="Etgu P."/>
            <person name="Feldblyum T.V."/>
            <person name="Feng J.-D."/>
            <person name="Fong B."/>
            <person name="Fujii C.Y."/>
            <person name="Gill J.E."/>
            <person name="Goldsmith A.D."/>
            <person name="Haas B."/>
            <person name="Hansen N.F."/>
            <person name="Hughes B."/>
            <person name="Huizar L."/>
            <person name="Hunter J.L."/>
            <person name="Jenkins J."/>
            <person name="Johnson-Hopson C."/>
            <person name="Khan S."/>
            <person name="Khaykin E."/>
            <person name="Kim C.J."/>
            <person name="Koo H.L."/>
            <person name="Kremenetskaia I."/>
            <person name="Kurtz D.B."/>
            <person name="Kwan A."/>
            <person name="Lam B."/>
            <person name="Langin-Hooper S."/>
            <person name="Lee A."/>
            <person name="Lee J.M."/>
            <person name="Lenz C.A."/>
            <person name="Li J.H."/>
            <person name="Li Y.-P."/>
            <person name="Lin X."/>
            <person name="Liu S.X."/>
            <person name="Liu Z.A."/>
            <person name="Luros J.S."/>
            <person name="Maiti R."/>
            <person name="Marziali A."/>
            <person name="Militscher J."/>
            <person name="Miranda M."/>
            <person name="Nguyen M."/>
            <person name="Nierman W.C."/>
            <person name="Osborne B.I."/>
            <person name="Pai G."/>
            <person name="Peterson J."/>
            <person name="Pham P.K."/>
            <person name="Rizzo M."/>
            <person name="Rooney T."/>
            <person name="Rowley D."/>
            <person name="Sakano H."/>
            <person name="Salzberg S.L."/>
            <person name="Schwartz J.R."/>
            <person name="Shinn P."/>
            <person name="Southwick A.M."/>
            <person name="Sun H."/>
            <person name="Tallon L.J."/>
            <person name="Tambunga G."/>
            <person name="Toriumi M.J."/>
            <person name="Town C.D."/>
            <person name="Utterback T."/>
            <person name="Van Aken S."/>
            <person name="Vaysberg M."/>
            <person name="Vysotskaia V.S."/>
            <person name="Walker M."/>
            <person name="Wu D."/>
            <person name="Yu G."/>
            <person name="Fraser C.M."/>
            <person name="Venter J.C."/>
            <person name="Davis R.W."/>
        </authorList>
    </citation>
    <scope>NUCLEOTIDE SEQUENCE [LARGE SCALE GENOMIC DNA]</scope>
    <source>
        <strain>cv. Columbia</strain>
    </source>
</reference>
<reference key="2">
    <citation type="journal article" date="2017" name="Plant J.">
        <title>Araport11: a complete reannotation of the Arabidopsis thaliana reference genome.</title>
        <authorList>
            <person name="Cheng C.Y."/>
            <person name="Krishnakumar V."/>
            <person name="Chan A.P."/>
            <person name="Thibaud-Nissen F."/>
            <person name="Schobel S."/>
            <person name="Town C.D."/>
        </authorList>
    </citation>
    <scope>GENOME REANNOTATION</scope>
    <source>
        <strain>cv. Columbia</strain>
    </source>
</reference>
<reference key="3">
    <citation type="journal article" date="2003" name="Science">
        <title>Empirical analysis of transcriptional activity in the Arabidopsis genome.</title>
        <authorList>
            <person name="Yamada K."/>
            <person name="Lim J."/>
            <person name="Dale J.M."/>
            <person name="Chen H."/>
            <person name="Shinn P."/>
            <person name="Palm C.J."/>
            <person name="Southwick A.M."/>
            <person name="Wu H.C."/>
            <person name="Kim C.J."/>
            <person name="Nguyen M."/>
            <person name="Pham P.K."/>
            <person name="Cheuk R.F."/>
            <person name="Karlin-Newmann G."/>
            <person name="Liu S.X."/>
            <person name="Lam B."/>
            <person name="Sakano H."/>
            <person name="Wu T."/>
            <person name="Yu G."/>
            <person name="Miranda M."/>
            <person name="Quach H.L."/>
            <person name="Tripp M."/>
            <person name="Chang C.H."/>
            <person name="Lee J.M."/>
            <person name="Toriumi M.J."/>
            <person name="Chan M.M."/>
            <person name="Tang C.C."/>
            <person name="Onodera C.S."/>
            <person name="Deng J.M."/>
            <person name="Akiyama K."/>
            <person name="Ansari Y."/>
            <person name="Arakawa T."/>
            <person name="Banh J."/>
            <person name="Banno F."/>
            <person name="Bowser L."/>
            <person name="Brooks S.Y."/>
            <person name="Carninci P."/>
            <person name="Chao Q."/>
            <person name="Choy N."/>
            <person name="Enju A."/>
            <person name="Goldsmith A.D."/>
            <person name="Gurjal M."/>
            <person name="Hansen N.F."/>
            <person name="Hayashizaki Y."/>
            <person name="Johnson-Hopson C."/>
            <person name="Hsuan V.W."/>
            <person name="Iida K."/>
            <person name="Karnes M."/>
            <person name="Khan S."/>
            <person name="Koesema E."/>
            <person name="Ishida J."/>
            <person name="Jiang P.X."/>
            <person name="Jones T."/>
            <person name="Kawai J."/>
            <person name="Kamiya A."/>
            <person name="Meyers C."/>
            <person name="Nakajima M."/>
            <person name="Narusaka M."/>
            <person name="Seki M."/>
            <person name="Sakurai T."/>
            <person name="Satou M."/>
            <person name="Tamse R."/>
            <person name="Vaysberg M."/>
            <person name="Wallender E.K."/>
            <person name="Wong C."/>
            <person name="Yamamura Y."/>
            <person name="Yuan S."/>
            <person name="Shinozaki K."/>
            <person name="Davis R.W."/>
            <person name="Theologis A."/>
            <person name="Ecker J.R."/>
        </authorList>
    </citation>
    <scope>NUCLEOTIDE SEQUENCE [LARGE SCALE MRNA]</scope>
    <source>
        <strain>cv. Columbia</strain>
    </source>
</reference>
<reference key="4">
    <citation type="submission" date="2002-03" db="EMBL/GenBank/DDBJ databases">
        <title>Full-length cDNA from Arabidopsis thaliana.</title>
        <authorList>
            <person name="Brover V.V."/>
            <person name="Troukhan M.E."/>
            <person name="Alexandrov N.A."/>
            <person name="Lu Y.-P."/>
            <person name="Flavell R.B."/>
            <person name="Feldmann K.A."/>
        </authorList>
    </citation>
    <scope>NUCLEOTIDE SEQUENCE [LARGE SCALE MRNA]</scope>
</reference>
<keyword id="KW-0560">Oxidoreductase</keyword>
<keyword id="KW-0575">Peroxidase</keyword>
<keyword id="KW-1185">Reference proteome</keyword>
<gene>
    <name type="primary">GPX8</name>
    <name type="ordered locus">At1g63460</name>
    <name type="ORF">F2K11.16</name>
</gene>
<protein>
    <recommendedName>
        <fullName>Probable glutathione peroxidase 8</fullName>
        <ecNumber>1.11.1.9</ecNumber>
    </recommendedName>
</protein>
<organism>
    <name type="scientific">Arabidopsis thaliana</name>
    <name type="common">Mouse-ear cress</name>
    <dbReference type="NCBI Taxonomy" id="3702"/>
    <lineage>
        <taxon>Eukaryota</taxon>
        <taxon>Viridiplantae</taxon>
        <taxon>Streptophyta</taxon>
        <taxon>Embryophyta</taxon>
        <taxon>Tracheophyta</taxon>
        <taxon>Spermatophyta</taxon>
        <taxon>Magnoliopsida</taxon>
        <taxon>eudicotyledons</taxon>
        <taxon>Gunneridae</taxon>
        <taxon>Pentapetalae</taxon>
        <taxon>rosids</taxon>
        <taxon>malvids</taxon>
        <taxon>Brassicales</taxon>
        <taxon>Brassicaceae</taxon>
        <taxon>Camelineae</taxon>
        <taxon>Arabidopsis</taxon>
    </lineage>
</organism>
<dbReference type="EC" id="1.11.1.9"/>
<dbReference type="EMBL" id="AC008047">
    <property type="protein sequence ID" value="AAF19709.1"/>
    <property type="status" value="ALT_SEQ"/>
    <property type="molecule type" value="Genomic_DNA"/>
</dbReference>
<dbReference type="EMBL" id="CP002684">
    <property type="protein sequence ID" value="AEE34102.1"/>
    <property type="molecule type" value="Genomic_DNA"/>
</dbReference>
<dbReference type="EMBL" id="BT003059">
    <property type="protein sequence ID" value="AAO23624.1"/>
    <property type="molecule type" value="mRNA"/>
</dbReference>
<dbReference type="EMBL" id="AY086991">
    <property type="protein sequence ID" value="AAM64552.1"/>
    <property type="molecule type" value="mRNA"/>
</dbReference>
<dbReference type="PIR" id="C96660">
    <property type="entry name" value="C96660"/>
</dbReference>
<dbReference type="RefSeq" id="NP_564813.1">
    <property type="nucleotide sequence ID" value="NM_105025.4"/>
</dbReference>
<dbReference type="SMR" id="Q8LBU2"/>
<dbReference type="FunCoup" id="Q8LBU2">
    <property type="interactions" value="2209"/>
</dbReference>
<dbReference type="STRING" id="3702.Q8LBU2"/>
<dbReference type="PeroxiBase" id="2503">
    <property type="entry name" value="AtGPx08"/>
</dbReference>
<dbReference type="iPTMnet" id="Q8LBU2"/>
<dbReference type="PaxDb" id="3702-AT1G63460.1"/>
<dbReference type="ProteomicsDB" id="220644"/>
<dbReference type="EnsemblPlants" id="AT1G63460.1">
    <property type="protein sequence ID" value="AT1G63460.1"/>
    <property type="gene ID" value="AT1G63460"/>
</dbReference>
<dbReference type="GeneID" id="842652"/>
<dbReference type="Gramene" id="AT1G63460.1">
    <property type="protein sequence ID" value="AT1G63460.1"/>
    <property type="gene ID" value="AT1G63460"/>
</dbReference>
<dbReference type="KEGG" id="ath:AT1G63460"/>
<dbReference type="Araport" id="AT1G63460"/>
<dbReference type="TAIR" id="AT1G63460">
    <property type="gene designation" value="GPX8"/>
</dbReference>
<dbReference type="eggNOG" id="KOG1651">
    <property type="taxonomic scope" value="Eukaryota"/>
</dbReference>
<dbReference type="HOGENOM" id="CLU_029507_0_1_1"/>
<dbReference type="InParanoid" id="Q8LBU2"/>
<dbReference type="OMA" id="RDYTEMN"/>
<dbReference type="OrthoDB" id="446890at2759"/>
<dbReference type="PhylomeDB" id="Q8LBU2"/>
<dbReference type="BioCyc" id="ARA:AT1G63460-MONOMER"/>
<dbReference type="PRO" id="PR:Q8LBU2"/>
<dbReference type="Proteomes" id="UP000006548">
    <property type="component" value="Chromosome 1"/>
</dbReference>
<dbReference type="ExpressionAtlas" id="Q8LBU2">
    <property type="expression patterns" value="baseline and differential"/>
</dbReference>
<dbReference type="GO" id="GO:0005829">
    <property type="term" value="C:cytosol"/>
    <property type="evidence" value="ECO:0000314"/>
    <property type="project" value="TAIR"/>
</dbReference>
<dbReference type="GO" id="GO:0005634">
    <property type="term" value="C:nucleus"/>
    <property type="evidence" value="ECO:0000314"/>
    <property type="project" value="TAIR"/>
</dbReference>
<dbReference type="GO" id="GO:0004602">
    <property type="term" value="F:glutathione peroxidase activity"/>
    <property type="evidence" value="ECO:0007669"/>
    <property type="project" value="UniProtKB-EC"/>
</dbReference>
<dbReference type="GO" id="GO:0004601">
    <property type="term" value="F:peroxidase activity"/>
    <property type="evidence" value="ECO:0000314"/>
    <property type="project" value="TAIR"/>
</dbReference>
<dbReference type="GO" id="GO:0006979">
    <property type="term" value="P:response to oxidative stress"/>
    <property type="evidence" value="ECO:0000315"/>
    <property type="project" value="TAIR"/>
</dbReference>
<dbReference type="CDD" id="cd00340">
    <property type="entry name" value="GSH_Peroxidase"/>
    <property type="match status" value="1"/>
</dbReference>
<dbReference type="FunFam" id="3.40.30.10:FF:000025">
    <property type="entry name" value="Glutathione peroxidase"/>
    <property type="match status" value="1"/>
</dbReference>
<dbReference type="Gene3D" id="3.40.30.10">
    <property type="entry name" value="Glutaredoxin"/>
    <property type="match status" value="1"/>
</dbReference>
<dbReference type="InterPro" id="IPR000889">
    <property type="entry name" value="Glutathione_peroxidase"/>
</dbReference>
<dbReference type="InterPro" id="IPR029759">
    <property type="entry name" value="GPX_AS"/>
</dbReference>
<dbReference type="InterPro" id="IPR029760">
    <property type="entry name" value="GPX_CS"/>
</dbReference>
<dbReference type="InterPro" id="IPR036249">
    <property type="entry name" value="Thioredoxin-like_sf"/>
</dbReference>
<dbReference type="PANTHER" id="PTHR11592">
    <property type="entry name" value="GLUTATHIONE PEROXIDASE"/>
    <property type="match status" value="1"/>
</dbReference>
<dbReference type="PANTHER" id="PTHR11592:SF27">
    <property type="entry name" value="GLUTATHIONE PEROXIDASE 8-RELATED"/>
    <property type="match status" value="1"/>
</dbReference>
<dbReference type="Pfam" id="PF00255">
    <property type="entry name" value="GSHPx"/>
    <property type="match status" value="1"/>
</dbReference>
<dbReference type="PIRSF" id="PIRSF000303">
    <property type="entry name" value="Glutathion_perox"/>
    <property type="match status" value="1"/>
</dbReference>
<dbReference type="PRINTS" id="PR01011">
    <property type="entry name" value="GLUTPROXDASE"/>
</dbReference>
<dbReference type="SUPFAM" id="SSF52833">
    <property type="entry name" value="Thioredoxin-like"/>
    <property type="match status" value="1"/>
</dbReference>
<dbReference type="PROSITE" id="PS00460">
    <property type="entry name" value="GLUTATHIONE_PEROXID_1"/>
    <property type="match status" value="1"/>
</dbReference>
<dbReference type="PROSITE" id="PS00763">
    <property type="entry name" value="GLUTATHIONE_PEROXID_2"/>
    <property type="match status" value="1"/>
</dbReference>
<dbReference type="PROSITE" id="PS51355">
    <property type="entry name" value="GLUTATHIONE_PEROXID_3"/>
    <property type="match status" value="1"/>
</dbReference>
<proteinExistence type="evidence at transcript level"/>